<comment type="function">
    <text>Low-potential electron donor to a number of redox enzymes.</text>
</comment>
<comment type="cofactor">
    <cofactor>
        <name>FMN</name>
        <dbReference type="ChEBI" id="CHEBI:58210"/>
    </cofactor>
</comment>
<comment type="similarity">
    <text evidence="2">Belongs to the flavodoxin family.</text>
</comment>
<evidence type="ECO:0000255" key="1">
    <source>
        <dbReference type="PROSITE-ProRule" id="PRU00088"/>
    </source>
</evidence>
<evidence type="ECO:0000305" key="2"/>
<feature type="chain" id="PRO_0000171619" description="Flavodoxin">
    <location>
        <begin position="1"/>
        <end position="146"/>
    </location>
</feature>
<feature type="domain" description="Flavodoxin-like" evidence="1">
    <location>
        <begin position="4"/>
        <end position="143"/>
    </location>
</feature>
<organism>
    <name type="scientific">Maridesulfovibrio salexigens (strain ATCC 14822 / DSM 2638 / NCIMB 8403 / VKM B-1763)</name>
    <name type="common">Desulfovibrio salexigens</name>
    <dbReference type="NCBI Taxonomy" id="526222"/>
    <lineage>
        <taxon>Bacteria</taxon>
        <taxon>Pseudomonadati</taxon>
        <taxon>Thermodesulfobacteriota</taxon>
        <taxon>Desulfovibrionia</taxon>
        <taxon>Desulfovibrionales</taxon>
        <taxon>Desulfovibrionaceae</taxon>
        <taxon>Maridesulfovibrio</taxon>
    </lineage>
</organism>
<reference key="1">
    <citation type="journal article" date="1990" name="Biochem. Biophys. Res. Commun.">
        <title>Identification, sequence determination, and expression of the flavodoxin gene from Desulfovibrio salexigens.</title>
        <authorList>
            <person name="Helms L.R."/>
            <person name="Krey G.D."/>
            <person name="Swenson R.P."/>
        </authorList>
    </citation>
    <scope>NUCLEOTIDE SEQUENCE [GENOMIC DNA]</scope>
</reference>
<reference key="2">
    <citation type="submission" date="2009-06" db="EMBL/GenBank/DDBJ databases">
        <title>Complete sequence of Desulfovibrio salexigens DSM 2638.</title>
        <authorList>
            <consortium name="US DOE Joint Genome Institute"/>
            <person name="Lucas S."/>
            <person name="Copeland A."/>
            <person name="Lapidus A."/>
            <person name="Glavina del Rio T."/>
            <person name="Tice H."/>
            <person name="Bruce D."/>
            <person name="Goodwin L."/>
            <person name="Pitluck S."/>
            <person name="Munk A.C."/>
            <person name="Brettin T."/>
            <person name="Detter J.C."/>
            <person name="Han C."/>
            <person name="Tapia R."/>
            <person name="Larimer F."/>
            <person name="Land M."/>
            <person name="Hauser L."/>
            <person name="Kyrpides N."/>
            <person name="Anderson I."/>
            <person name="Wall J.D."/>
            <person name="Arkin A.P."/>
            <person name="Dehal P."/>
            <person name="Chivian D."/>
            <person name="Giles B."/>
            <person name="Hazen T.C."/>
        </authorList>
    </citation>
    <scope>NUCLEOTIDE SEQUENCE [LARGE SCALE GENOMIC DNA]</scope>
    <source>
        <strain>ATCC 14822 / DSM 2638 / NCIMB 8403 / VKM B-1763</strain>
    </source>
</reference>
<proteinExistence type="inferred from homology"/>
<gene>
    <name type="ordered locus">Desal_0805</name>
</gene>
<accession>P18086</accession>
<accession>C6BZ47</accession>
<name>FLAV_MARSD</name>
<keyword id="KW-0249">Electron transport</keyword>
<keyword id="KW-0285">Flavoprotein</keyword>
<keyword id="KW-0288">FMN</keyword>
<keyword id="KW-1185">Reference proteome</keyword>
<keyword id="KW-0813">Transport</keyword>
<protein>
    <recommendedName>
        <fullName>Flavodoxin</fullName>
    </recommendedName>
</protein>
<dbReference type="EMBL" id="M35475">
    <property type="protein sequence ID" value="AAA23368.1"/>
    <property type="molecule type" value="Genomic_DNA"/>
</dbReference>
<dbReference type="EMBL" id="CP001649">
    <property type="protein sequence ID" value="ACS78871.1"/>
    <property type="molecule type" value="Genomic_DNA"/>
</dbReference>
<dbReference type="PIR" id="A34640">
    <property type="entry name" value="A34640"/>
</dbReference>
<dbReference type="RefSeq" id="WP_015850690.1">
    <property type="nucleotide sequence ID" value="NC_012881.1"/>
</dbReference>
<dbReference type="SMR" id="P18086"/>
<dbReference type="KEGG" id="dsa:Desal_0805"/>
<dbReference type="eggNOG" id="COG0716">
    <property type="taxonomic scope" value="Bacteria"/>
</dbReference>
<dbReference type="HOGENOM" id="CLU_051402_4_2_7"/>
<dbReference type="OrthoDB" id="9790745at2"/>
<dbReference type="Proteomes" id="UP000002601">
    <property type="component" value="Chromosome"/>
</dbReference>
<dbReference type="GO" id="GO:0009055">
    <property type="term" value="F:electron transfer activity"/>
    <property type="evidence" value="ECO:0007669"/>
    <property type="project" value="InterPro"/>
</dbReference>
<dbReference type="GO" id="GO:0010181">
    <property type="term" value="F:FMN binding"/>
    <property type="evidence" value="ECO:0007669"/>
    <property type="project" value="InterPro"/>
</dbReference>
<dbReference type="Gene3D" id="3.40.50.360">
    <property type="match status" value="1"/>
</dbReference>
<dbReference type="InterPro" id="IPR010087">
    <property type="entry name" value="Flav_short"/>
</dbReference>
<dbReference type="InterPro" id="IPR001094">
    <property type="entry name" value="Flavdoxin-like"/>
</dbReference>
<dbReference type="InterPro" id="IPR050619">
    <property type="entry name" value="Flavodoxin"/>
</dbReference>
<dbReference type="InterPro" id="IPR008254">
    <property type="entry name" value="Flavodoxin/NO_synth"/>
</dbReference>
<dbReference type="InterPro" id="IPR001226">
    <property type="entry name" value="Flavodoxin_CS"/>
</dbReference>
<dbReference type="InterPro" id="IPR029039">
    <property type="entry name" value="Flavoprotein-like_sf"/>
</dbReference>
<dbReference type="NCBIfam" id="TIGR01753">
    <property type="entry name" value="flav_short"/>
    <property type="match status" value="1"/>
</dbReference>
<dbReference type="PANTHER" id="PTHR42809:SF1">
    <property type="entry name" value="FLAVODOXIN 1"/>
    <property type="match status" value="1"/>
</dbReference>
<dbReference type="PANTHER" id="PTHR42809">
    <property type="entry name" value="FLAVODOXIN 2"/>
    <property type="match status" value="1"/>
</dbReference>
<dbReference type="Pfam" id="PF00258">
    <property type="entry name" value="Flavodoxin_1"/>
    <property type="match status" value="1"/>
</dbReference>
<dbReference type="PRINTS" id="PR00369">
    <property type="entry name" value="FLAVODOXIN"/>
</dbReference>
<dbReference type="SUPFAM" id="SSF52218">
    <property type="entry name" value="Flavoproteins"/>
    <property type="match status" value="1"/>
</dbReference>
<dbReference type="PROSITE" id="PS00201">
    <property type="entry name" value="FLAVODOXIN"/>
    <property type="match status" value="1"/>
</dbReference>
<dbReference type="PROSITE" id="PS50902">
    <property type="entry name" value="FLAVODOXIN_LIKE"/>
    <property type="match status" value="1"/>
</dbReference>
<sequence length="146" mass="15812">MSKSLIVYGSTTGNTETAAEYVAEAFENKEIDVELKNVTDVSVADLGNGYDIVLFGCSTWGEEEIELQDDFIPLYDSLENADLKGKKVSVFGCGDSDYTYFCGAVDAIEEKLEKMGAVVIGDSLKIDGDPERDEIVSWGSGIADKI</sequence>